<evidence type="ECO:0000255" key="1">
    <source>
        <dbReference type="HAMAP-Rule" id="MF_01206"/>
    </source>
</evidence>
<name>MSRP_SALTY</name>
<accession>P67347</accession>
<accession>Q8XES1</accession>
<feature type="signal peptide" description="Tat-type signal" evidence="1">
    <location>
        <begin position="1"/>
        <end position="44"/>
    </location>
</feature>
<feature type="chain" id="PRO_0000070696" description="Protein-methionine-sulfoxide reductase catalytic subunit MsrP" evidence="1">
    <location>
        <begin position="45"/>
        <end position="334"/>
    </location>
</feature>
<feature type="binding site" evidence="1">
    <location>
        <position position="88"/>
    </location>
    <ligand>
        <name>Mo-molybdopterin</name>
        <dbReference type="ChEBI" id="CHEBI:71302"/>
    </ligand>
</feature>
<feature type="binding site" evidence="1">
    <location>
        <begin position="91"/>
        <end position="92"/>
    </location>
    <ligand>
        <name>Mo-molybdopterin</name>
        <dbReference type="ChEBI" id="CHEBI:71302"/>
    </ligand>
</feature>
<feature type="binding site" evidence="1">
    <location>
        <position position="146"/>
    </location>
    <ligand>
        <name>Mo-molybdopterin</name>
        <dbReference type="ChEBI" id="CHEBI:71302"/>
    </ligand>
    <ligandPart>
        <name>Mo</name>
        <dbReference type="ChEBI" id="CHEBI:28685"/>
    </ligandPart>
</feature>
<feature type="binding site" evidence="1">
    <location>
        <position position="181"/>
    </location>
    <ligand>
        <name>Mo-molybdopterin</name>
        <dbReference type="ChEBI" id="CHEBI:71302"/>
    </ligand>
</feature>
<feature type="binding site" evidence="1">
    <location>
        <position position="233"/>
    </location>
    <ligand>
        <name>Mo-molybdopterin</name>
        <dbReference type="ChEBI" id="CHEBI:71302"/>
    </ligand>
</feature>
<feature type="binding site" evidence="1">
    <location>
        <position position="238"/>
    </location>
    <ligand>
        <name>Mo-molybdopterin</name>
        <dbReference type="ChEBI" id="CHEBI:71302"/>
    </ligand>
</feature>
<feature type="binding site" evidence="1">
    <location>
        <begin position="249"/>
        <end position="251"/>
    </location>
    <ligand>
        <name>Mo-molybdopterin</name>
        <dbReference type="ChEBI" id="CHEBI:71302"/>
    </ligand>
</feature>
<proteinExistence type="inferred from homology"/>
<keyword id="KW-0479">Metal-binding</keyword>
<keyword id="KW-0500">Molybdenum</keyword>
<keyword id="KW-0560">Oxidoreductase</keyword>
<keyword id="KW-0574">Periplasm</keyword>
<keyword id="KW-1185">Reference proteome</keyword>
<keyword id="KW-0732">Signal</keyword>
<protein>
    <recommendedName>
        <fullName evidence="1">Protein-methionine-sulfoxide reductase catalytic subunit MsrP</fullName>
        <ecNumber evidence="1">1.8.5.-</ecNumber>
    </recommendedName>
</protein>
<organism>
    <name type="scientific">Salmonella typhimurium (strain LT2 / SGSC1412 / ATCC 700720)</name>
    <dbReference type="NCBI Taxonomy" id="99287"/>
    <lineage>
        <taxon>Bacteria</taxon>
        <taxon>Pseudomonadati</taxon>
        <taxon>Pseudomonadota</taxon>
        <taxon>Gammaproteobacteria</taxon>
        <taxon>Enterobacterales</taxon>
        <taxon>Enterobacteriaceae</taxon>
        <taxon>Salmonella</taxon>
    </lineage>
</organism>
<comment type="function">
    <text evidence="1">Part of the MsrPQ system that repairs oxidized periplasmic proteins containing methionine sulfoxide residues (Met-O), using respiratory chain electrons. Thus protects these proteins from oxidative-stress damage caused by reactive species of oxygen and chlorine generated by the host defense mechanisms. MsrPQ is essential for the maintenance of envelope integrity under bleach stress, rescuing a wide series of structurally unrelated periplasmic proteins from methionine oxidation, including the primary periplasmic chaperone SurA and the lipoprotein Pal. The catalytic subunit MsrP is non-stereospecific, being able to reduce both (R-) and (S-) diastereoisomers of methionine sulfoxide.</text>
</comment>
<comment type="catalytic activity">
    <reaction evidence="1">
        <text>L-methionyl-[protein] + a quinone + H2O = L-methionyl-(S)-S-oxide-[protein] + a quinol</text>
        <dbReference type="Rhea" id="RHEA:51292"/>
        <dbReference type="Rhea" id="RHEA-COMP:12313"/>
        <dbReference type="Rhea" id="RHEA-COMP:12315"/>
        <dbReference type="ChEBI" id="CHEBI:15377"/>
        <dbReference type="ChEBI" id="CHEBI:16044"/>
        <dbReference type="ChEBI" id="CHEBI:24646"/>
        <dbReference type="ChEBI" id="CHEBI:44120"/>
        <dbReference type="ChEBI" id="CHEBI:132124"/>
    </reaction>
</comment>
<comment type="catalytic activity">
    <reaction evidence="1">
        <text>L-methionyl-[protein] + a quinone + H2O = L-methionyl-(R)-S-oxide-[protein] + a quinol</text>
        <dbReference type="Rhea" id="RHEA:51296"/>
        <dbReference type="Rhea" id="RHEA-COMP:12313"/>
        <dbReference type="Rhea" id="RHEA-COMP:12314"/>
        <dbReference type="ChEBI" id="CHEBI:15377"/>
        <dbReference type="ChEBI" id="CHEBI:16044"/>
        <dbReference type="ChEBI" id="CHEBI:24646"/>
        <dbReference type="ChEBI" id="CHEBI:45764"/>
        <dbReference type="ChEBI" id="CHEBI:132124"/>
    </reaction>
</comment>
<comment type="cofactor">
    <cofactor evidence="1">
        <name>Mo-molybdopterin</name>
        <dbReference type="ChEBI" id="CHEBI:71302"/>
    </cofactor>
    <text evidence="1">Binds 1 Mo-molybdopterin (Mo-MPT) cofactor per subunit.</text>
</comment>
<comment type="subunit">
    <text evidence="1">Heterodimer of a catalytic subunit (MsrP) and a heme-binding subunit (MsrQ).</text>
</comment>
<comment type="subcellular location">
    <subcellularLocation>
        <location evidence="1">Periplasm</location>
    </subcellularLocation>
    <text evidence="1">Is attached to the inner membrane when interacting with the MsrQ subunit.</text>
</comment>
<comment type="PTM">
    <text evidence="1">Predicted to be exported by the Tat system. The position of the signal peptide cleavage has not been experimentally proven.</text>
</comment>
<comment type="similarity">
    <text evidence="1">Belongs to the MsrP family.</text>
</comment>
<sequence>MKKIRPLTEADVTAESAFFMQRRQVLKALGISAAALSLPSTAQADLFSWFKGNDRPKAPAGKPLEFSQPAAWRSDLALTPEDKVTGYNNFYEFGLDKADPAANAGSLKTEPWTLKISGEVAKPFTLDYDDLTHRFPLEERIYRMRCVEAWSMVVPWIGFPLYKLLAQAQPTSHAKYVAFETLYAPDDMPGQKDRFIGGGLKYPYVEGLRLDEAMHPLTLMTVGVYGKALPPQNGAPIRLIVPWKYGFKGIKSIVSIKLTRERPPTTWNLSAPNEYGFYANVNPHVDHPRWSQATERFIGSGGILDVQRQPTLLFNGYANEVASLYRGLNLRENF</sequence>
<dbReference type="EC" id="1.8.5.-" evidence="1"/>
<dbReference type="EMBL" id="AE006468">
    <property type="protein sequence ID" value="AAL22246.1"/>
    <property type="molecule type" value="Genomic_DNA"/>
</dbReference>
<dbReference type="RefSeq" id="NP_462287.1">
    <property type="nucleotide sequence ID" value="NC_003197.2"/>
</dbReference>
<dbReference type="RefSeq" id="WP_000723876.1">
    <property type="nucleotide sequence ID" value="NC_003197.2"/>
</dbReference>
<dbReference type="SMR" id="P67347"/>
<dbReference type="STRING" id="99287.STM3377"/>
<dbReference type="PaxDb" id="99287-STM3377"/>
<dbReference type="GeneID" id="1254900"/>
<dbReference type="KEGG" id="stm:STM3377"/>
<dbReference type="PATRIC" id="fig|99287.12.peg.3578"/>
<dbReference type="HOGENOM" id="CLU_045520_0_0_6"/>
<dbReference type="OMA" id="DWPYVEG"/>
<dbReference type="PhylomeDB" id="P67347"/>
<dbReference type="BioCyc" id="SENT99287:STM3377-MONOMER"/>
<dbReference type="Proteomes" id="UP000001014">
    <property type="component" value="Chromosome"/>
</dbReference>
<dbReference type="GO" id="GO:0042597">
    <property type="term" value="C:periplasmic space"/>
    <property type="evidence" value="ECO:0007669"/>
    <property type="project" value="UniProtKB-SubCell"/>
</dbReference>
<dbReference type="GO" id="GO:0046872">
    <property type="term" value="F:metal ion binding"/>
    <property type="evidence" value="ECO:0007669"/>
    <property type="project" value="UniProtKB-KW"/>
</dbReference>
<dbReference type="GO" id="GO:0043546">
    <property type="term" value="F:molybdopterin cofactor binding"/>
    <property type="evidence" value="ECO:0007669"/>
    <property type="project" value="UniProtKB-UniRule"/>
</dbReference>
<dbReference type="GO" id="GO:0016672">
    <property type="term" value="F:oxidoreductase activity, acting on a sulfur group of donors, quinone or similar compound as acceptor"/>
    <property type="evidence" value="ECO:0007669"/>
    <property type="project" value="UniProtKB-UniRule"/>
</dbReference>
<dbReference type="GO" id="GO:0030091">
    <property type="term" value="P:protein repair"/>
    <property type="evidence" value="ECO:0007669"/>
    <property type="project" value="UniProtKB-UniRule"/>
</dbReference>
<dbReference type="CDD" id="cd02107">
    <property type="entry name" value="YedY_like_Moco"/>
    <property type="match status" value="1"/>
</dbReference>
<dbReference type="FunFam" id="3.90.420.10:FF:000001">
    <property type="entry name" value="Protein-methionine-sulfoxide reductase catalytic subunit MsrP"/>
    <property type="match status" value="1"/>
</dbReference>
<dbReference type="Gene3D" id="3.90.420.10">
    <property type="entry name" value="Oxidoreductase, molybdopterin-binding domain"/>
    <property type="match status" value="1"/>
</dbReference>
<dbReference type="HAMAP" id="MF_01206">
    <property type="entry name" value="MsrP"/>
    <property type="match status" value="1"/>
</dbReference>
<dbReference type="InterPro" id="IPR022867">
    <property type="entry name" value="MsrP"/>
</dbReference>
<dbReference type="InterPro" id="IPR000572">
    <property type="entry name" value="OxRdtase_Mopterin-bd_dom"/>
</dbReference>
<dbReference type="InterPro" id="IPR036374">
    <property type="entry name" value="OxRdtase_Mopterin-bd_sf"/>
</dbReference>
<dbReference type="InterPro" id="IPR006311">
    <property type="entry name" value="TAT_signal"/>
</dbReference>
<dbReference type="NCBIfam" id="NF003767">
    <property type="entry name" value="PRK05363.1"/>
    <property type="match status" value="1"/>
</dbReference>
<dbReference type="PANTHER" id="PTHR43032">
    <property type="entry name" value="PROTEIN-METHIONINE-SULFOXIDE REDUCTASE"/>
    <property type="match status" value="1"/>
</dbReference>
<dbReference type="PANTHER" id="PTHR43032:SF3">
    <property type="entry name" value="PROTEIN-METHIONINE-SULFOXIDE REDUCTASE CATALYTIC SUBUNIT MSRP"/>
    <property type="match status" value="1"/>
</dbReference>
<dbReference type="Pfam" id="PF00174">
    <property type="entry name" value="Oxidored_molyb"/>
    <property type="match status" value="1"/>
</dbReference>
<dbReference type="SUPFAM" id="SSF56524">
    <property type="entry name" value="Oxidoreductase molybdopterin-binding domain"/>
    <property type="match status" value="1"/>
</dbReference>
<dbReference type="PROSITE" id="PS51318">
    <property type="entry name" value="TAT"/>
    <property type="match status" value="1"/>
</dbReference>
<gene>
    <name evidence="1" type="primary">msrP</name>
    <name type="ordered locus">STM3377</name>
</gene>
<reference key="1">
    <citation type="journal article" date="2001" name="Nature">
        <title>Complete genome sequence of Salmonella enterica serovar Typhimurium LT2.</title>
        <authorList>
            <person name="McClelland M."/>
            <person name="Sanderson K.E."/>
            <person name="Spieth J."/>
            <person name="Clifton S.W."/>
            <person name="Latreille P."/>
            <person name="Courtney L."/>
            <person name="Porwollik S."/>
            <person name="Ali J."/>
            <person name="Dante M."/>
            <person name="Du F."/>
            <person name="Hou S."/>
            <person name="Layman D."/>
            <person name="Leonard S."/>
            <person name="Nguyen C."/>
            <person name="Scott K."/>
            <person name="Holmes A."/>
            <person name="Grewal N."/>
            <person name="Mulvaney E."/>
            <person name="Ryan E."/>
            <person name="Sun H."/>
            <person name="Florea L."/>
            <person name="Miller W."/>
            <person name="Stoneking T."/>
            <person name="Nhan M."/>
            <person name="Waterston R."/>
            <person name="Wilson R.K."/>
        </authorList>
    </citation>
    <scope>NUCLEOTIDE SEQUENCE [LARGE SCALE GENOMIC DNA]</scope>
    <source>
        <strain>LT2 / SGSC1412 / ATCC 700720</strain>
    </source>
</reference>